<keyword id="KW-0150">Chloroplast</keyword>
<keyword id="KW-0249">Electron transport</keyword>
<keyword id="KW-0349">Heme</keyword>
<keyword id="KW-0408">Iron</keyword>
<keyword id="KW-0472">Membrane</keyword>
<keyword id="KW-0479">Metal-binding</keyword>
<keyword id="KW-0602">Photosynthesis</keyword>
<keyword id="KW-0934">Plastid</keyword>
<keyword id="KW-0793">Thylakoid</keyword>
<keyword id="KW-0812">Transmembrane</keyword>
<keyword id="KW-1133">Transmembrane helix</keyword>
<keyword id="KW-0813">Transport</keyword>
<feature type="chain" id="PRO_0000061780" description="Cytochrome b6">
    <location>
        <begin position="1"/>
        <end position="219"/>
    </location>
</feature>
<feature type="transmembrane region" description="Helical" evidence="1">
    <location>
        <begin position="32"/>
        <end position="52"/>
    </location>
</feature>
<feature type="transmembrane region" description="Helical" evidence="1">
    <location>
        <begin position="90"/>
        <end position="110"/>
    </location>
</feature>
<feature type="transmembrane region" description="Helical" evidence="1">
    <location>
        <begin position="116"/>
        <end position="136"/>
    </location>
</feature>
<feature type="transmembrane region" description="Helical" evidence="1">
    <location>
        <begin position="190"/>
        <end position="210"/>
    </location>
</feature>
<feature type="binding site" description="covalent" evidence="1">
    <location>
        <position position="35"/>
    </location>
    <ligand>
        <name>heme c</name>
        <dbReference type="ChEBI" id="CHEBI:61717"/>
    </ligand>
</feature>
<feature type="binding site" description="axial binding residue" evidence="1">
    <location>
        <position position="86"/>
    </location>
    <ligand>
        <name>heme b</name>
        <dbReference type="ChEBI" id="CHEBI:60344"/>
        <label>2</label>
    </ligand>
    <ligandPart>
        <name>Fe</name>
        <dbReference type="ChEBI" id="CHEBI:18248"/>
    </ligandPart>
</feature>
<feature type="binding site" description="axial binding residue" evidence="1">
    <location>
        <position position="100"/>
    </location>
    <ligand>
        <name>heme b</name>
        <dbReference type="ChEBI" id="CHEBI:60344"/>
        <label>1</label>
    </ligand>
    <ligandPart>
        <name>Fe</name>
        <dbReference type="ChEBI" id="CHEBI:18248"/>
    </ligandPart>
</feature>
<feature type="binding site" description="axial binding residue" evidence="1">
    <location>
        <position position="191"/>
    </location>
    <ligand>
        <name>heme b</name>
        <dbReference type="ChEBI" id="CHEBI:60344"/>
        <label>2</label>
    </ligand>
    <ligandPart>
        <name>Fe</name>
        <dbReference type="ChEBI" id="CHEBI:18248"/>
    </ligandPart>
</feature>
<feature type="binding site" description="axial binding residue" evidence="1">
    <location>
        <position position="206"/>
    </location>
    <ligand>
        <name>heme b</name>
        <dbReference type="ChEBI" id="CHEBI:60344"/>
        <label>1</label>
    </ligand>
    <ligandPart>
        <name>Fe</name>
        <dbReference type="ChEBI" id="CHEBI:18248"/>
    </ligandPart>
</feature>
<gene>
    <name evidence="1" type="primary">petB</name>
</gene>
<proteinExistence type="inferred from homology"/>
<reference key="1">
    <citation type="journal article" date="2001" name="Mol. Genet. Genomics">
        <title>Organisation and expression of the plastid genome of the dinoflagellate Amphidinium operculatum.</title>
        <authorList>
            <person name="Barbrook A.C."/>
            <person name="Symington H."/>
            <person name="Nisbet R.E.R."/>
            <person name="Larkum A."/>
            <person name="Howe C.J."/>
        </authorList>
    </citation>
    <scope>NUCLEOTIDE SEQUENCE [GENOMIC DNA]</scope>
    <source>
        <strain>CCAP 1102/6</strain>
    </source>
</reference>
<accession>Q8WHC6</accession>
<comment type="function">
    <text evidence="1">Component of the cytochrome b6-f complex, which mediates electron transfer between photosystem II (PSII) and photosystem I (PSI), cyclic electron flow around PSI, and state transitions.</text>
</comment>
<comment type="cofactor">
    <cofactor evidence="1">
        <name>heme b</name>
        <dbReference type="ChEBI" id="CHEBI:60344"/>
    </cofactor>
    <text evidence="1">Binds 2 heme b groups non-covalently with two histidine residues as axial ligands.</text>
</comment>
<comment type="cofactor">
    <cofactor evidence="1">
        <name>heme c</name>
        <dbReference type="ChEBI" id="CHEBI:61717"/>
    </cofactor>
    <text evidence="1">Binds one heme group covalently by a single cysteine link with no axial amino acid ligand. This heme was named heme ci.</text>
</comment>
<comment type="subunit">
    <text evidence="1">The 4 large subunits of the cytochrome b6-f complex are cytochrome b6, subunit IV (17 kDa polypeptide, PetD), cytochrome f and the Rieske protein, while the 4 small subunits are PetG, PetL, PetM and PetN. The complex functions as a dimer.</text>
</comment>
<comment type="subcellular location">
    <subcellularLocation>
        <location evidence="1">Plastid</location>
        <location evidence="1">Chloroplast thylakoid membrane</location>
        <topology evidence="1">Multi-pass membrane protein</topology>
    </subcellularLocation>
</comment>
<comment type="miscellaneous">
    <text evidence="1">Heme 1 (or BH or b566) is high-potential and absorbs at about 566 nm, and heme 2 (or BL or b562) is low-potential and absorbs at about 562 nm.</text>
</comment>
<comment type="similarity">
    <text evidence="1">Belongs to the cytochrome b family. PetB subfamily.</text>
</comment>
<dbReference type="EMBL" id="AY048664">
    <property type="protein sequence ID" value="AAL13437.1"/>
    <property type="molecule type" value="Genomic_DNA"/>
</dbReference>
<dbReference type="GO" id="GO:0009535">
    <property type="term" value="C:chloroplast thylakoid membrane"/>
    <property type="evidence" value="ECO:0007669"/>
    <property type="project" value="UniProtKB-SubCell"/>
</dbReference>
<dbReference type="GO" id="GO:0045158">
    <property type="term" value="F:electron transporter, transferring electrons within cytochrome b6/f complex of photosystem II activity"/>
    <property type="evidence" value="ECO:0007669"/>
    <property type="project" value="UniProtKB-UniRule"/>
</dbReference>
<dbReference type="GO" id="GO:0046872">
    <property type="term" value="F:metal ion binding"/>
    <property type="evidence" value="ECO:0007669"/>
    <property type="project" value="UniProtKB-KW"/>
</dbReference>
<dbReference type="GO" id="GO:0016491">
    <property type="term" value="F:oxidoreductase activity"/>
    <property type="evidence" value="ECO:0007669"/>
    <property type="project" value="InterPro"/>
</dbReference>
<dbReference type="GO" id="GO:0015979">
    <property type="term" value="P:photosynthesis"/>
    <property type="evidence" value="ECO:0007669"/>
    <property type="project" value="UniProtKB-UniRule"/>
</dbReference>
<dbReference type="GO" id="GO:0022904">
    <property type="term" value="P:respiratory electron transport chain"/>
    <property type="evidence" value="ECO:0007669"/>
    <property type="project" value="InterPro"/>
</dbReference>
<dbReference type="CDD" id="cd00284">
    <property type="entry name" value="Cytochrome_b_N"/>
    <property type="match status" value="1"/>
</dbReference>
<dbReference type="Gene3D" id="1.20.810.10">
    <property type="entry name" value="Cytochrome Bc1 Complex, Chain C"/>
    <property type="match status" value="1"/>
</dbReference>
<dbReference type="HAMAP" id="MF_00633">
    <property type="entry name" value="Cytb6_f_cytb6"/>
    <property type="match status" value="1"/>
</dbReference>
<dbReference type="InterPro" id="IPR005797">
    <property type="entry name" value="Cyt_b/b6_N"/>
</dbReference>
<dbReference type="InterPro" id="IPR023530">
    <property type="entry name" value="Cyt_B6_PetB"/>
</dbReference>
<dbReference type="InterPro" id="IPR027387">
    <property type="entry name" value="Cytb/b6-like_sf"/>
</dbReference>
<dbReference type="InterPro" id="IPR048259">
    <property type="entry name" value="Cytochrome_b_N_euk/bac"/>
</dbReference>
<dbReference type="InterPro" id="IPR016174">
    <property type="entry name" value="Di-haem_cyt_TM"/>
</dbReference>
<dbReference type="PANTHER" id="PTHR19271">
    <property type="entry name" value="CYTOCHROME B"/>
    <property type="match status" value="1"/>
</dbReference>
<dbReference type="PANTHER" id="PTHR19271:SF16">
    <property type="entry name" value="CYTOCHROME B"/>
    <property type="match status" value="1"/>
</dbReference>
<dbReference type="Pfam" id="PF00033">
    <property type="entry name" value="Cytochrome_B"/>
    <property type="match status" value="1"/>
</dbReference>
<dbReference type="PIRSF" id="PIRSF000032">
    <property type="entry name" value="Cytochrome_b6"/>
    <property type="match status" value="1"/>
</dbReference>
<dbReference type="SUPFAM" id="SSF81342">
    <property type="entry name" value="Transmembrane di-heme cytochromes"/>
    <property type="match status" value="1"/>
</dbReference>
<dbReference type="PROSITE" id="PS51002">
    <property type="entry name" value="CYTB_NTER"/>
    <property type="match status" value="1"/>
</dbReference>
<organism>
    <name type="scientific">Amphidinium operculatum</name>
    <name type="common">Dinoflagellate</name>
    <dbReference type="NCBI Taxonomy" id="107036"/>
    <lineage>
        <taxon>Eukaryota</taxon>
        <taxon>Sar</taxon>
        <taxon>Alveolata</taxon>
        <taxon>Dinophyceae</taxon>
        <taxon>Amphidiniales</taxon>
        <taxon>Amphidiniaceae</taxon>
        <taxon>Amphidinium</taxon>
    </lineage>
</organism>
<geneLocation type="chloroplast"/>
<evidence type="ECO:0000255" key="1">
    <source>
        <dbReference type="HAMAP-Rule" id="MF_00633"/>
    </source>
</evidence>
<name>CYB6_AMPOP</name>
<sequence>MGFIYDWCEERLELQSIADDILSKFVPSHVNIFYCFGGIVLTCFIIQAATGFAMTLYYRPNVVEALSSVTYITNEVSFGWLVRSIHRTSSGLMVLVLLLHVSRVYLTAGFKKPRELTWISGVILAICTVSFGVTGYSLPWDQVGYWACKIVTATPEALNNVFPSLGTVFVTLLVGGTSVGQPTXTRFYQAHTFILPLVTLALLLTHFLMIRKQGISGPL</sequence>
<protein>
    <recommendedName>
        <fullName evidence="1">Cytochrome b6</fullName>
    </recommendedName>
</protein>